<protein>
    <recommendedName>
        <fullName evidence="1">Large ribosomal subunit protein bL35</fullName>
    </recommendedName>
    <alternativeName>
        <fullName evidence="2">50S ribosomal protein L35</fullName>
    </alternativeName>
</protein>
<keyword id="KW-0687">Ribonucleoprotein</keyword>
<keyword id="KW-0689">Ribosomal protein</keyword>
<name>RL35_BRUSI</name>
<feature type="chain" id="PRO_1000081598" description="Large ribosomal subunit protein bL35">
    <location>
        <begin position="1"/>
        <end position="66"/>
    </location>
</feature>
<accession>B0CJL7</accession>
<gene>
    <name evidence="1" type="primary">rpmI</name>
    <name type="ordered locus">BSUIS_A1959</name>
</gene>
<proteinExistence type="inferred from homology"/>
<organism>
    <name type="scientific">Brucella suis (strain ATCC 23445 / NCTC 10510)</name>
    <dbReference type="NCBI Taxonomy" id="470137"/>
    <lineage>
        <taxon>Bacteria</taxon>
        <taxon>Pseudomonadati</taxon>
        <taxon>Pseudomonadota</taxon>
        <taxon>Alphaproteobacteria</taxon>
        <taxon>Hyphomicrobiales</taxon>
        <taxon>Brucellaceae</taxon>
        <taxon>Brucella/Ochrobactrum group</taxon>
        <taxon>Brucella</taxon>
    </lineage>
</organism>
<comment type="similarity">
    <text evidence="1">Belongs to the bacterial ribosomal protein bL35 family.</text>
</comment>
<evidence type="ECO:0000255" key="1">
    <source>
        <dbReference type="HAMAP-Rule" id="MF_00514"/>
    </source>
</evidence>
<evidence type="ECO:0000305" key="2"/>
<reference key="1">
    <citation type="submission" date="2007-12" db="EMBL/GenBank/DDBJ databases">
        <title>Brucella suis ATCC 23445 whole genome shotgun sequencing project.</title>
        <authorList>
            <person name="Setubal J.C."/>
            <person name="Bowns C."/>
            <person name="Boyle S."/>
            <person name="Crasta O.R."/>
            <person name="Czar M.J."/>
            <person name="Dharmanolla C."/>
            <person name="Gillespie J.J."/>
            <person name="Kenyon R.W."/>
            <person name="Lu J."/>
            <person name="Mane S."/>
            <person name="Mohapatra S."/>
            <person name="Nagrani S."/>
            <person name="Purkayastha A."/>
            <person name="Rajasimha H.K."/>
            <person name="Shallom J.M."/>
            <person name="Shallom S."/>
            <person name="Shukla M."/>
            <person name="Snyder E.E."/>
            <person name="Sobral B.W."/>
            <person name="Wattam A.R."/>
            <person name="Will R."/>
            <person name="Williams K."/>
            <person name="Yoo H."/>
            <person name="Bruce D."/>
            <person name="Detter C."/>
            <person name="Munk C."/>
            <person name="Brettin T.S."/>
        </authorList>
    </citation>
    <scope>NUCLEOTIDE SEQUENCE [LARGE SCALE GENOMIC DNA]</scope>
    <source>
        <strain>ATCC 23445 / NCTC 10510</strain>
    </source>
</reference>
<dbReference type="EMBL" id="CP000911">
    <property type="protein sequence ID" value="ABY38969.1"/>
    <property type="molecule type" value="Genomic_DNA"/>
</dbReference>
<dbReference type="RefSeq" id="WP_002965184.1">
    <property type="nucleotide sequence ID" value="NC_010169.1"/>
</dbReference>
<dbReference type="SMR" id="B0CJL7"/>
<dbReference type="GeneID" id="93017574"/>
<dbReference type="KEGG" id="bmt:BSUIS_A1959"/>
<dbReference type="HOGENOM" id="CLU_169643_2_1_5"/>
<dbReference type="Proteomes" id="UP000008545">
    <property type="component" value="Chromosome I"/>
</dbReference>
<dbReference type="GO" id="GO:0022625">
    <property type="term" value="C:cytosolic large ribosomal subunit"/>
    <property type="evidence" value="ECO:0007669"/>
    <property type="project" value="TreeGrafter"/>
</dbReference>
<dbReference type="GO" id="GO:0003735">
    <property type="term" value="F:structural constituent of ribosome"/>
    <property type="evidence" value="ECO:0007669"/>
    <property type="project" value="InterPro"/>
</dbReference>
<dbReference type="GO" id="GO:0006412">
    <property type="term" value="P:translation"/>
    <property type="evidence" value="ECO:0007669"/>
    <property type="project" value="UniProtKB-UniRule"/>
</dbReference>
<dbReference type="FunFam" id="4.10.410.60:FF:000001">
    <property type="entry name" value="50S ribosomal protein L35"/>
    <property type="match status" value="1"/>
</dbReference>
<dbReference type="Gene3D" id="4.10.410.60">
    <property type="match status" value="1"/>
</dbReference>
<dbReference type="HAMAP" id="MF_00514">
    <property type="entry name" value="Ribosomal_bL35"/>
    <property type="match status" value="1"/>
</dbReference>
<dbReference type="InterPro" id="IPR001706">
    <property type="entry name" value="Ribosomal_bL35"/>
</dbReference>
<dbReference type="InterPro" id="IPR021137">
    <property type="entry name" value="Ribosomal_bL35-like"/>
</dbReference>
<dbReference type="InterPro" id="IPR018265">
    <property type="entry name" value="Ribosomal_bL35_CS"/>
</dbReference>
<dbReference type="InterPro" id="IPR037229">
    <property type="entry name" value="Ribosomal_bL35_sf"/>
</dbReference>
<dbReference type="NCBIfam" id="TIGR00001">
    <property type="entry name" value="rpmI_bact"/>
    <property type="match status" value="1"/>
</dbReference>
<dbReference type="PANTHER" id="PTHR33343">
    <property type="entry name" value="54S RIBOSOMAL PROTEIN BL35M"/>
    <property type="match status" value="1"/>
</dbReference>
<dbReference type="PANTHER" id="PTHR33343:SF1">
    <property type="entry name" value="LARGE RIBOSOMAL SUBUNIT PROTEIN BL35M"/>
    <property type="match status" value="1"/>
</dbReference>
<dbReference type="Pfam" id="PF01632">
    <property type="entry name" value="Ribosomal_L35p"/>
    <property type="match status" value="1"/>
</dbReference>
<dbReference type="PRINTS" id="PR00064">
    <property type="entry name" value="RIBOSOMALL35"/>
</dbReference>
<dbReference type="SUPFAM" id="SSF143034">
    <property type="entry name" value="L35p-like"/>
    <property type="match status" value="1"/>
</dbReference>
<dbReference type="PROSITE" id="PS00936">
    <property type="entry name" value="RIBOSOMAL_L35"/>
    <property type="match status" value="1"/>
</dbReference>
<sequence length="66" mass="7186">MPKMKTKSAAKKRFKITGTGKVKAAAAGKRHGMIKRSNKFIRDARGTMVLADADAKIVKQFLPNGL</sequence>